<evidence type="ECO:0000250" key="1">
    <source>
        <dbReference type="UniProtKB" id="Q6AXY4"/>
    </source>
</evidence>
<evidence type="ECO:0000269" key="2">
    <source>
    </source>
</evidence>
<evidence type="ECO:0000269" key="3">
    <source>
    </source>
</evidence>
<evidence type="ECO:0000269" key="4">
    <source>
    </source>
</evidence>
<evidence type="ECO:0000269" key="5">
    <source>
    </source>
</evidence>
<evidence type="ECO:0000269" key="6">
    <source>
    </source>
</evidence>
<evidence type="ECO:0000269" key="7">
    <source>
    </source>
</evidence>
<evidence type="ECO:0000269" key="8">
    <source>
    </source>
</evidence>
<evidence type="ECO:0000269" key="9">
    <source>
    </source>
</evidence>
<evidence type="ECO:0000269" key="10">
    <source>
    </source>
</evidence>
<evidence type="ECO:0000269" key="11">
    <source>
    </source>
</evidence>
<evidence type="ECO:0000269" key="12">
    <source>
    </source>
</evidence>
<evidence type="ECO:0000269" key="13">
    <source>
    </source>
</evidence>
<evidence type="ECO:0000269" key="14">
    <source>
    </source>
</evidence>
<evidence type="ECO:0000269" key="15">
    <source>
    </source>
</evidence>
<evidence type="ECO:0000269" key="16">
    <source>
    </source>
</evidence>
<evidence type="ECO:0000269" key="17">
    <source>
    </source>
</evidence>
<evidence type="ECO:0000269" key="18">
    <source ref="3"/>
</evidence>
<evidence type="ECO:0000305" key="19"/>
<evidence type="ECO:0007744" key="20">
    <source>
    </source>
</evidence>
<evidence type="ECO:0007744" key="21">
    <source>
    </source>
</evidence>
<evidence type="ECO:0007744" key="22">
    <source>
    </source>
</evidence>
<evidence type="ECO:0007744" key="23">
    <source>
    </source>
</evidence>
<evidence type="ECO:0007829" key="24">
    <source>
        <dbReference type="PDB" id="3E0J"/>
    </source>
</evidence>
<evidence type="ECO:0007829" key="25">
    <source>
        <dbReference type="PDB" id="6TNY"/>
    </source>
</evidence>
<sequence>MFSEQAAQRAHTLLSPPSANNATFARVPVATYTNSSQPFRLGERSFSRQYAHIYATRLIQMRPFLENRAQQHWGSGVGVKKLCELQPEEKCCVVGTLFKAMPLQPSILREVSEEHNLLPQPPRSKYIHPDDELVLEDELQRIKLKGTIDVSKLVTGTVLAVFGSVRDDGKFLVEDYCFADLAPQKPAPPLDTDRFVLLVSGLGLGGGGGESLLGTQLLVDVVTGQLGDEGEQCSAAHVSRVILAGNLLSHSTQSRDSINKAKYLTKKTQAASVEAVKMLDEILLQLSASVPVDVMPGEFDPTNYTLPQQPLHPCMFPLATAYSTLQLVTNPYQATIDGVRFLGTSGQNVSDIFRYSSMEDHLEILEWTLRVRHISPTAPDTLGCYPFYKTDPFIFPECPHVYFCGNTPSFGSKIIRGPEDQTVLLVTVPDFSATQTACLVNLRSLACQPISFSGFGAEDDDLGGLGLGP</sequence>
<comment type="function">
    <text evidence="4 7 10 11 12 14 15 16">Accessory component of both the DNA polymerase delta complex and the DNA polymerase zeta complex (PubMed:17317665, PubMed:22801543, PubMed:24449906). As a component of the trimeric and tetrameric DNA polymerase delta complexes (Pol-delta3 and Pol-delta4, respectively), plays a role in high fidelity genome replication, including in lagging strand synthesis, and repair (PubMed:12403614, PubMed:16510448, PubMed:19074196, PubMed:20334433, PubMed:24035200). Pol-delta3 and Pol-delta4 are characterized by the absence or the presence of POLD4. They exhibit differences in catalytic activity. Most notably, Pol-delta3 shows higher proofreading activity than Pol-delta4 (PubMed:19074196, PubMed:20334433). Although both Pol-delta3 and Pol-delta4 process Okazaki fragments in vitro, Pol-delta3 may also be better suited to fulfill this task, exhibiting near-absence of strand displacement activity compared to Pol-delta4 and stalling on encounter with the 5'-blocking oligonucleotides. Pol-delta3 idling process may avoid the formation of a gap, while maintaining a nick that can be readily ligated (PubMed:24035200). Along with DNA polymerase kappa, DNA polymerase delta carries out approximately half of nucleotide excision repair (NER) synthesis following UV irradiation (PubMed:20227374). Under conditions of DNA replication stress, required for the repair of broken replication forks through break-induced replication (BIR) (PubMed:24310611). Involved in the translesion synthesis (TLS) of templates carrying O6-methylguanine or abasic sites performed by Pol-delta4, independently of DNA polymerase zeta (REV3L) or eta (POLH). Facilitates abasic site bypass by DNA polymerase delta by promoting extension from the nucleotide inserted opposite the lesion. Also involved in TLS as a component of the DNA polymerase zeta complex (PubMed:24449906). Along with POLD3, dramatically increases the efficiency and processivity of DNA synthesis of the DNA polymerase zeta complex compared to the minimal zeta complex, consisting of only REV3L and REV7 (PubMed:24449906).</text>
</comment>
<comment type="subunit">
    <text evidence="1 2 3 4 5 6 7 8 13 16 17">Component of both the DNA polymerase delta and DNA polymerase zeta complexes (PubMed:17317665, PubMed:22801543, PubMed:24449906, PubMed:31449058). Component of the tetrameric DNA polymerase delta complex (Pol-delta4), which consists of POLD1/p125, POLD2/p50, POLD3/p66/p68 and POLD4/p12, with POLD1 bearing DNA polymerase and 3' to 5' proofreading exonuclease activities (PubMed:17317665, PubMed:22801543). Within Pol-delta4, directly interacts with POLD1, POLD3 and POLD4 (PubMed:11328591, PubMed:16510448). Following stress caused by DNA damaging agents or by replication stress, POLD4 is degraded and Pol-delta4 is converted into a trimeric form of the complex (Pol-delta3), which consists of POLD1, POLD2 and POLD3. Pol-delta3 is the major form occurring at S phase replication sites, as well as DNA damage sites (PubMed:17317665, PubMed:22801543). Also observed as a dimeric complex with POLD2 (Pol-delta2 complex). Pol-delta2 is relatively insensitive to the PCNA stimulation (2-5-fold) compared to Pol-delta4 that is stimulated by over 50-fold (PubMed:12403614). Contrary to the other components of Pol-delta4, does not directly interact with PCNA (PubMed:12403614, PubMed:16510448). As POLD1 and POLD4, directly interacts with WRNIP1; this interaction stimulates DNA polymerase delta-mediated DNA synthesis, independently of the presence of PCNA. This stimulation may be due predominantly to an increase of initiation frequency and also to increased processivity (PubMed:15670210). Directly interacts with POLDIP2 and POLDIP3 (PubMed:12522211). Directly interacts with KCTD13/PDIP1; in the presence of PCNA, this interaction may stimulate DNA polymerase activity (PubMed:11593007). Component of the tetrameric Pol-zeta complex (Pol-zeta4), which consists of REV3L, MAD2L2, POLD2 and POLD3, with REV3L bearing DNA polymerase catalytic activity (PubMed:24449906). Interacts with KCTD10 (By similarity).</text>
</comment>
<comment type="interaction">
    <interactant intactId="EBI-372354">
        <id>P49005</id>
    </interactant>
    <interactant intactId="EBI-358311">
        <id>P12004</id>
        <label>PCNA</label>
    </interactant>
    <organismsDiffer>false</organismsDiffer>
    <experiments>3</experiments>
</comment>
<comment type="interaction">
    <interactant intactId="EBI-372354">
        <id>P49005</id>
    </interactant>
    <interactant intactId="EBI-716569">
        <id>P28340</id>
        <label>POLD1</label>
    </interactant>
    <organismsDiffer>false</organismsDiffer>
    <experiments>16</experiments>
</comment>
<comment type="interaction">
    <interactant intactId="EBI-372354">
        <id>P49005</id>
    </interactant>
    <interactant intactId="EBI-864956">
        <id>Q15054</id>
        <label>POLD3</label>
    </interactant>
    <organismsDiffer>false</organismsDiffer>
    <experiments>11</experiments>
</comment>
<comment type="interaction">
    <interactant intactId="EBI-372354">
        <id>P49005</id>
    </interactant>
    <interactant intactId="EBI-864968">
        <id>Q9HCU8</id>
        <label>POLD4</label>
    </interactant>
    <organismsDiffer>false</organismsDiffer>
    <experiments>7</experiments>
</comment>
<comment type="interaction">
    <interactant intactId="EBI-372354">
        <id>P49005</id>
    </interactant>
    <interactant intactId="EBI-2513471">
        <id>Q96S55</id>
        <label>WRNIP1</label>
    </interactant>
    <organismsDiffer>false</organismsDiffer>
    <experiments>2</experiments>
</comment>
<comment type="subcellular location">
    <subcellularLocation>
        <location evidence="13">Nucleus</location>
    </subcellularLocation>
    <text evidence="13">Recruited to DNA damage sites within 2 hours following UV irradiation.</text>
</comment>
<comment type="developmental stage">
    <text evidence="13">Expression is cell cycle-dependent, with highest levels in G2/M phase and lowest in S.</text>
</comment>
<comment type="similarity">
    <text evidence="19">Belongs to the DNA polymerase delta/II small subunit family.</text>
</comment>
<name>DPOD2_HUMAN</name>
<reference key="1">
    <citation type="journal article" date="1995" name="Genomics">
        <title>Cloning of the cDNAs for the small subunits of bovine and human DNA polymerase delta and chromosomal location of the human gene (POLD2).</title>
        <authorList>
            <person name="Zhang J."/>
            <person name="Tan C.-K."/>
            <person name="McMullen B."/>
            <person name="Downey K.M."/>
            <person name="So A.G."/>
        </authorList>
    </citation>
    <scope>NUCLEOTIDE SEQUENCE [MRNA]</scope>
</reference>
<reference key="2">
    <citation type="journal article" date="2000" name="Biochim. Biophys. Acta">
        <title>Characterization of the 5'-flanking region of the gene encoding the 50 kDa subunit of human DNA polymerase delta.</title>
        <authorList>
            <person name="Perez A."/>
            <person name="Leon A."/>
            <person name="Lee M.Y.W.T."/>
        </authorList>
    </citation>
    <scope>NUCLEOTIDE SEQUENCE [GENOMIC DNA]</scope>
</reference>
<reference key="3">
    <citation type="submission" date="2002-05" db="EMBL/GenBank/DDBJ databases">
        <authorList>
            <consortium name="NIEHS SNPs program"/>
        </authorList>
    </citation>
    <scope>NUCLEOTIDE SEQUENCE [GENOMIC DNA]</scope>
    <scope>VARIANT SER-303</scope>
</reference>
<reference key="4">
    <citation type="journal article" date="2004" name="Nat. Genet.">
        <title>Complete sequencing and characterization of 21,243 full-length human cDNAs.</title>
        <authorList>
            <person name="Ota T."/>
            <person name="Suzuki Y."/>
            <person name="Nishikawa T."/>
            <person name="Otsuki T."/>
            <person name="Sugiyama T."/>
            <person name="Irie R."/>
            <person name="Wakamatsu A."/>
            <person name="Hayashi K."/>
            <person name="Sato H."/>
            <person name="Nagai K."/>
            <person name="Kimura K."/>
            <person name="Makita H."/>
            <person name="Sekine M."/>
            <person name="Obayashi M."/>
            <person name="Nishi T."/>
            <person name="Shibahara T."/>
            <person name="Tanaka T."/>
            <person name="Ishii S."/>
            <person name="Yamamoto J."/>
            <person name="Saito K."/>
            <person name="Kawai Y."/>
            <person name="Isono Y."/>
            <person name="Nakamura Y."/>
            <person name="Nagahari K."/>
            <person name="Murakami K."/>
            <person name="Yasuda T."/>
            <person name="Iwayanagi T."/>
            <person name="Wagatsuma M."/>
            <person name="Shiratori A."/>
            <person name="Sudo H."/>
            <person name="Hosoiri T."/>
            <person name="Kaku Y."/>
            <person name="Kodaira H."/>
            <person name="Kondo H."/>
            <person name="Sugawara M."/>
            <person name="Takahashi M."/>
            <person name="Kanda K."/>
            <person name="Yokoi T."/>
            <person name="Furuya T."/>
            <person name="Kikkawa E."/>
            <person name="Omura Y."/>
            <person name="Abe K."/>
            <person name="Kamihara K."/>
            <person name="Katsuta N."/>
            <person name="Sato K."/>
            <person name="Tanikawa M."/>
            <person name="Yamazaki M."/>
            <person name="Ninomiya K."/>
            <person name="Ishibashi T."/>
            <person name="Yamashita H."/>
            <person name="Murakawa K."/>
            <person name="Fujimori K."/>
            <person name="Tanai H."/>
            <person name="Kimata M."/>
            <person name="Watanabe M."/>
            <person name="Hiraoka S."/>
            <person name="Chiba Y."/>
            <person name="Ishida S."/>
            <person name="Ono Y."/>
            <person name="Takiguchi S."/>
            <person name="Watanabe S."/>
            <person name="Yosida M."/>
            <person name="Hotuta T."/>
            <person name="Kusano J."/>
            <person name="Kanehori K."/>
            <person name="Takahashi-Fujii A."/>
            <person name="Hara H."/>
            <person name="Tanase T.-O."/>
            <person name="Nomura Y."/>
            <person name="Togiya S."/>
            <person name="Komai F."/>
            <person name="Hara R."/>
            <person name="Takeuchi K."/>
            <person name="Arita M."/>
            <person name="Imose N."/>
            <person name="Musashino K."/>
            <person name="Yuuki H."/>
            <person name="Oshima A."/>
            <person name="Sasaki N."/>
            <person name="Aotsuka S."/>
            <person name="Yoshikawa Y."/>
            <person name="Matsunawa H."/>
            <person name="Ichihara T."/>
            <person name="Shiohata N."/>
            <person name="Sano S."/>
            <person name="Moriya S."/>
            <person name="Momiyama H."/>
            <person name="Satoh N."/>
            <person name="Takami S."/>
            <person name="Terashima Y."/>
            <person name="Suzuki O."/>
            <person name="Nakagawa S."/>
            <person name="Senoh A."/>
            <person name="Mizoguchi H."/>
            <person name="Goto Y."/>
            <person name="Shimizu F."/>
            <person name="Wakebe H."/>
            <person name="Hishigaki H."/>
            <person name="Watanabe T."/>
            <person name="Sugiyama A."/>
            <person name="Takemoto M."/>
            <person name="Kawakami B."/>
            <person name="Yamazaki M."/>
            <person name="Watanabe K."/>
            <person name="Kumagai A."/>
            <person name="Itakura S."/>
            <person name="Fukuzumi Y."/>
            <person name="Fujimori Y."/>
            <person name="Komiyama M."/>
            <person name="Tashiro H."/>
            <person name="Tanigami A."/>
            <person name="Fujiwara T."/>
            <person name="Ono T."/>
            <person name="Yamada K."/>
            <person name="Fujii Y."/>
            <person name="Ozaki K."/>
            <person name="Hirao M."/>
            <person name="Ohmori Y."/>
            <person name="Kawabata A."/>
            <person name="Hikiji T."/>
            <person name="Kobatake N."/>
            <person name="Inagaki H."/>
            <person name="Ikema Y."/>
            <person name="Okamoto S."/>
            <person name="Okitani R."/>
            <person name="Kawakami T."/>
            <person name="Noguchi S."/>
            <person name="Itoh T."/>
            <person name="Shigeta K."/>
            <person name="Senba T."/>
            <person name="Matsumura K."/>
            <person name="Nakajima Y."/>
            <person name="Mizuno T."/>
            <person name="Morinaga M."/>
            <person name="Sasaki M."/>
            <person name="Togashi T."/>
            <person name="Oyama M."/>
            <person name="Hata H."/>
            <person name="Watanabe M."/>
            <person name="Komatsu T."/>
            <person name="Mizushima-Sugano J."/>
            <person name="Satoh T."/>
            <person name="Shirai Y."/>
            <person name="Takahashi Y."/>
            <person name="Nakagawa K."/>
            <person name="Okumura K."/>
            <person name="Nagase T."/>
            <person name="Nomura N."/>
            <person name="Kikuchi H."/>
            <person name="Masuho Y."/>
            <person name="Yamashita R."/>
            <person name="Nakai K."/>
            <person name="Yada T."/>
            <person name="Nakamura Y."/>
            <person name="Ohara O."/>
            <person name="Isogai T."/>
            <person name="Sugano S."/>
        </authorList>
    </citation>
    <scope>NUCLEOTIDE SEQUENCE [LARGE SCALE MRNA]</scope>
    <source>
        <tissue>Cerebellum</tissue>
    </source>
</reference>
<reference key="5">
    <citation type="journal article" date="2003" name="Science">
        <title>Human chromosome 7: DNA sequence and biology.</title>
        <authorList>
            <person name="Scherer S.W."/>
            <person name="Cheung J."/>
            <person name="MacDonald J.R."/>
            <person name="Osborne L.R."/>
            <person name="Nakabayashi K."/>
            <person name="Herbrick J.-A."/>
            <person name="Carson A.R."/>
            <person name="Parker-Katiraee L."/>
            <person name="Skaug J."/>
            <person name="Khaja R."/>
            <person name="Zhang J."/>
            <person name="Hudek A.K."/>
            <person name="Li M."/>
            <person name="Haddad M."/>
            <person name="Duggan G.E."/>
            <person name="Fernandez B.A."/>
            <person name="Kanematsu E."/>
            <person name="Gentles S."/>
            <person name="Christopoulos C.C."/>
            <person name="Choufani S."/>
            <person name="Kwasnicka D."/>
            <person name="Zheng X.H."/>
            <person name="Lai Z."/>
            <person name="Nusskern D.R."/>
            <person name="Zhang Q."/>
            <person name="Gu Z."/>
            <person name="Lu F."/>
            <person name="Zeesman S."/>
            <person name="Nowaczyk M.J."/>
            <person name="Teshima I."/>
            <person name="Chitayat D."/>
            <person name="Shuman C."/>
            <person name="Weksberg R."/>
            <person name="Zackai E.H."/>
            <person name="Grebe T.A."/>
            <person name="Cox S.R."/>
            <person name="Kirkpatrick S.J."/>
            <person name="Rahman N."/>
            <person name="Friedman J.M."/>
            <person name="Heng H.H.Q."/>
            <person name="Pelicci P.G."/>
            <person name="Lo-Coco F."/>
            <person name="Belloni E."/>
            <person name="Shaffer L.G."/>
            <person name="Pober B."/>
            <person name="Morton C.C."/>
            <person name="Gusella J.F."/>
            <person name="Bruns G.A.P."/>
            <person name="Korf B.R."/>
            <person name="Quade B.J."/>
            <person name="Ligon A.H."/>
            <person name="Ferguson H."/>
            <person name="Higgins A.W."/>
            <person name="Leach N.T."/>
            <person name="Herrick S.R."/>
            <person name="Lemyre E."/>
            <person name="Farra C.G."/>
            <person name="Kim H.-G."/>
            <person name="Summers A.M."/>
            <person name="Gripp K.W."/>
            <person name="Roberts W."/>
            <person name="Szatmari P."/>
            <person name="Winsor E.J.T."/>
            <person name="Grzeschik K.-H."/>
            <person name="Teebi A."/>
            <person name="Minassian B.A."/>
            <person name="Kere J."/>
            <person name="Armengol L."/>
            <person name="Pujana M.A."/>
            <person name="Estivill X."/>
            <person name="Wilson M.D."/>
            <person name="Koop B.F."/>
            <person name="Tosi S."/>
            <person name="Moore G.E."/>
            <person name="Boright A.P."/>
            <person name="Zlotorynski E."/>
            <person name="Kerem B."/>
            <person name="Kroisel P.M."/>
            <person name="Petek E."/>
            <person name="Oscier D.G."/>
            <person name="Mould S.J."/>
            <person name="Doehner H."/>
            <person name="Doehner K."/>
            <person name="Rommens J.M."/>
            <person name="Vincent J.B."/>
            <person name="Venter J.C."/>
            <person name="Li P.W."/>
            <person name="Mural R.J."/>
            <person name="Adams M.D."/>
            <person name="Tsui L.-C."/>
        </authorList>
    </citation>
    <scope>NUCLEOTIDE SEQUENCE [LARGE SCALE GENOMIC DNA]</scope>
</reference>
<reference key="6">
    <citation type="submission" date="2005-09" db="EMBL/GenBank/DDBJ databases">
        <authorList>
            <person name="Mural R.J."/>
            <person name="Istrail S."/>
            <person name="Sutton G."/>
            <person name="Florea L."/>
            <person name="Halpern A.L."/>
            <person name="Mobarry C.M."/>
            <person name="Lippert R."/>
            <person name="Walenz B."/>
            <person name="Shatkay H."/>
            <person name="Dew I."/>
            <person name="Miller J.R."/>
            <person name="Flanigan M.J."/>
            <person name="Edwards N.J."/>
            <person name="Bolanos R."/>
            <person name="Fasulo D."/>
            <person name="Halldorsson B.V."/>
            <person name="Hannenhalli S."/>
            <person name="Turner R."/>
            <person name="Yooseph S."/>
            <person name="Lu F."/>
            <person name="Nusskern D.R."/>
            <person name="Shue B.C."/>
            <person name="Zheng X.H."/>
            <person name="Zhong F."/>
            <person name="Delcher A.L."/>
            <person name="Huson D.H."/>
            <person name="Kravitz S.A."/>
            <person name="Mouchard L."/>
            <person name="Reinert K."/>
            <person name="Remington K.A."/>
            <person name="Clark A.G."/>
            <person name="Waterman M.S."/>
            <person name="Eichler E.E."/>
            <person name="Adams M.D."/>
            <person name="Hunkapiller M.W."/>
            <person name="Myers E.W."/>
            <person name="Venter J.C."/>
        </authorList>
    </citation>
    <scope>NUCLEOTIDE SEQUENCE [LARGE SCALE GENOMIC DNA]</scope>
</reference>
<reference key="7">
    <citation type="journal article" date="2004" name="Genome Res.">
        <title>The status, quality, and expansion of the NIH full-length cDNA project: the Mammalian Gene Collection (MGC).</title>
        <authorList>
            <consortium name="The MGC Project Team"/>
        </authorList>
    </citation>
    <scope>NUCLEOTIDE SEQUENCE [LARGE SCALE MRNA]</scope>
    <source>
        <tissue>Lung</tissue>
    </source>
</reference>
<reference key="8">
    <citation type="journal article" date="2001" name="J. Biochem.">
        <title>The human homologue of fission Yeast cdc27, p66, is a component of active human DNA polymerase delta.</title>
        <authorList>
            <person name="Shikata K."/>
            <person name="Ohta S."/>
            <person name="Yamada K."/>
            <person name="Obuse C."/>
            <person name="Yoshikawa H."/>
            <person name="Tsurimoto T."/>
        </authorList>
    </citation>
    <scope>INTERACTION WITH POLD1 AND POLD3</scope>
</reference>
<reference key="9">
    <citation type="journal article" date="2001" name="Proc. Natl. Acad. Sci. U.S.A.">
        <title>A tumor necrosis factor alpha- and interleukin 6-inducible protein that interacts with the small subunit of DNA polymerase delta and proliferating cell nuclear antigen.</title>
        <authorList>
            <person name="He H."/>
            <person name="Tan C.-K."/>
            <person name="Downey K.M."/>
            <person name="So A.G."/>
        </authorList>
    </citation>
    <scope>INTERACTION WITH KCTD13</scope>
</reference>
<reference key="10">
    <citation type="journal article" date="2002" name="Biochemistry">
        <title>Reconstitution and characterization of the human DNA polymerase delta four-subunit holoenzyme.</title>
        <authorList>
            <person name="Xie B."/>
            <person name="Mazloum N."/>
            <person name="Liu L."/>
            <person name="Rahmeh A."/>
            <person name="Li H."/>
            <person name="Lee M.Y."/>
        </authorList>
    </citation>
    <scope>FUNCTION</scope>
    <scope>CHARACTERIZATION OF POL-DELTA2 AND POL-DELTA4 COMPLEXES</scope>
    <scope>LACK OF INTERACTION WITH PCNA</scope>
</reference>
<reference key="11">
    <citation type="journal article" date="2003" name="J. Biol. Chem.">
        <title>Identification of a novel protein, PDIP38, that interacts with the p50 subunit of DNA polymerase delta and proliferating cell nuclear antigen.</title>
        <authorList>
            <person name="Liu L."/>
            <person name="Rodriguez-Belmonte E.M."/>
            <person name="Mazloum N."/>
            <person name="Xie B."/>
            <person name="Lee M.Y.W.T."/>
        </authorList>
    </citation>
    <scope>INTERACTION WITH POLD1; POLDIP2 AND POLDIP3</scope>
</reference>
<reference key="12">
    <citation type="journal article" date="2005" name="Genes Cells">
        <title>Human Werner helicase interacting protein 1 (WRNIP1) functions as a novel modulator for DNA polymerase delta.</title>
        <authorList>
            <person name="Tsurimoto T."/>
            <person name="Shinozaki A."/>
            <person name="Yano M."/>
            <person name="Seki M."/>
            <person name="Enomoto T."/>
        </authorList>
    </citation>
    <scope>INTERACTION WITH WRNIP1</scope>
</reference>
<reference key="13">
    <citation type="journal article" date="2006" name="J. Biol. Chem.">
        <title>Functional roles of p12, the fourth subunit of human DNA polymerase delta.</title>
        <authorList>
            <person name="Li H."/>
            <person name="Xie B."/>
            <person name="Zhou Y."/>
            <person name="Rahmeh A."/>
            <person name="Trusa S."/>
            <person name="Zhang S."/>
            <person name="Gao Y."/>
            <person name="Lee E.Y."/>
            <person name="Lee M.Y."/>
        </authorList>
    </citation>
    <scope>FUNCTION</scope>
    <scope>INTERACTION WITH POLD1; POLD3 AND POLD4</scope>
    <scope>LACK OF INTERACTION WITH PCNA</scope>
</reference>
<reference key="14">
    <citation type="journal article" date="2007" name="J. Biol. Chem.">
        <title>A novel DNA damage response: rapid degradation of the p12 subunit of dna polymerase delta.</title>
        <authorList>
            <person name="Zhang S."/>
            <person name="Zhou Y."/>
            <person name="Trusa S."/>
            <person name="Meng X."/>
            <person name="Lee E.Y."/>
            <person name="Lee M.Y."/>
        </authorList>
    </citation>
    <scope>IDENTIFICATION IN POL-DELTA COMPLEX</scope>
</reference>
<reference key="15">
    <citation type="journal article" date="2009" name="Nucleic Acids Res.">
        <title>DNA damage alters DNA polymerase delta to a form that exhibits increased discrimination against modified template bases and mismatched primers.</title>
        <authorList>
            <person name="Meng X."/>
            <person name="Zhou Y."/>
            <person name="Zhang S."/>
            <person name="Lee E.Y."/>
            <person name="Frick D.N."/>
            <person name="Lee M.Y."/>
        </authorList>
    </citation>
    <scope>FUNCTION</scope>
    <scope>CHARACTERIZATION OF POL-DELTA3 AND POL-DELTA4</scope>
</reference>
<reference key="16">
    <citation type="journal article" date="2010" name="Biochemistry">
        <title>The p12 subunit of human polymerase delta modulates the rate and fidelity of DNA synthesis.</title>
        <authorList>
            <person name="Meng X."/>
            <person name="Zhou Y."/>
            <person name="Lee E.Y."/>
            <person name="Lee M.Y."/>
            <person name="Frick D.N."/>
        </authorList>
    </citation>
    <scope>FUNCTION</scope>
    <scope>IDENTIFICATION IN POL-DELTA COMPLEX</scope>
</reference>
<reference key="17">
    <citation type="journal article" date="2010" name="Mol. Cell">
        <title>Three DNA polymerases, recruited by different mechanisms, carry out NER repair synthesis in human cells.</title>
        <authorList>
            <person name="Ogi T."/>
            <person name="Limsirichaikul S."/>
            <person name="Overmeer R.M."/>
            <person name="Volker M."/>
            <person name="Takenaka K."/>
            <person name="Cloney R."/>
            <person name="Nakazawa Y."/>
            <person name="Niimi A."/>
            <person name="Miki Y."/>
            <person name="Jaspers N.G."/>
            <person name="Mullenders L.H."/>
            <person name="Yamashita S."/>
            <person name="Fousteri M.I."/>
            <person name="Lehmann A.R."/>
        </authorList>
    </citation>
    <scope>FUNCTION IN NUCLEOTIDE EXCISION REPAIR</scope>
</reference>
<reference key="18">
    <citation type="journal article" date="2010" name="Sci. Signal.">
        <title>Quantitative phosphoproteomics reveals widespread full phosphorylation site occupancy during mitosis.</title>
        <authorList>
            <person name="Olsen J.V."/>
            <person name="Vermeulen M."/>
            <person name="Santamaria A."/>
            <person name="Kumar C."/>
            <person name="Miller M.L."/>
            <person name="Jensen L.J."/>
            <person name="Gnad F."/>
            <person name="Cox J."/>
            <person name="Jensen T.S."/>
            <person name="Nigg E.A."/>
            <person name="Brunak S."/>
            <person name="Mann M."/>
        </authorList>
    </citation>
    <scope>PHOSPHORYLATION [LARGE SCALE ANALYSIS] AT SER-15</scope>
    <scope>IDENTIFICATION BY MASS SPECTROMETRY [LARGE SCALE ANALYSIS]</scope>
    <source>
        <tissue>Cervix carcinoma</tissue>
    </source>
</reference>
<reference key="19">
    <citation type="journal article" date="2011" name="BMC Syst. Biol.">
        <title>Initial characterization of the human central proteome.</title>
        <authorList>
            <person name="Burkard T.R."/>
            <person name="Planyavsky M."/>
            <person name="Kaupe I."/>
            <person name="Breitwieser F.P."/>
            <person name="Buerckstuemmer T."/>
            <person name="Bennett K.L."/>
            <person name="Superti-Furga G."/>
            <person name="Colinge J."/>
        </authorList>
    </citation>
    <scope>IDENTIFICATION BY MASS SPECTROMETRY [LARGE SCALE ANALYSIS]</scope>
</reference>
<reference key="20">
    <citation type="journal article" date="2012" name="Cell Cycle">
        <title>Spatiotemporal recruitment of human DNA polymerase delta to sites of UV damage.</title>
        <authorList>
            <person name="Chea J."/>
            <person name="Zhang S."/>
            <person name="Zhao H."/>
            <person name="Zhang Z."/>
            <person name="Lee E.Y."/>
            <person name="Darzynkiewicz Z."/>
            <person name="Lee M.Y."/>
        </authorList>
    </citation>
    <scope>SUBCELLULAR LOCATION</scope>
    <scope>IDENTIFICATION IN POL-DELTA COMPLEX</scope>
    <scope>DEVELOPMENTAL STAGE</scope>
</reference>
<reference key="21">
    <citation type="journal article" date="2012" name="Mol. Cell. Proteomics">
        <title>Comparative large-scale characterisation of plant vs. mammal proteins reveals similar and idiosyncratic N-alpha acetylation features.</title>
        <authorList>
            <person name="Bienvenut W.V."/>
            <person name="Sumpton D."/>
            <person name="Martinez A."/>
            <person name="Lilla S."/>
            <person name="Espagne C."/>
            <person name="Meinnel T."/>
            <person name="Giglione C."/>
        </authorList>
    </citation>
    <scope>ACETYLATION [LARGE SCALE ANALYSIS] AT MET-1</scope>
    <scope>IDENTIFICATION BY MASS SPECTROMETRY [LARGE SCALE ANALYSIS]</scope>
</reference>
<reference key="22">
    <citation type="journal article" date="2012" name="Proc. Natl. Acad. Sci. U.S.A.">
        <title>N-terminal acetylome analyses and functional insights of the N-terminal acetyltransferase NatB.</title>
        <authorList>
            <person name="Van Damme P."/>
            <person name="Lasa M."/>
            <person name="Polevoda B."/>
            <person name="Gazquez C."/>
            <person name="Elosegui-Artola A."/>
            <person name="Kim D.S."/>
            <person name="De Juan-Pardo E."/>
            <person name="Demeyer K."/>
            <person name="Hole K."/>
            <person name="Larrea E."/>
            <person name="Timmerman E."/>
            <person name="Prieto J."/>
            <person name="Arnesen T."/>
            <person name="Sherman F."/>
            <person name="Gevaert K."/>
            <person name="Aldabe R."/>
        </authorList>
    </citation>
    <scope>ACETYLATION [LARGE SCALE ANALYSIS] AT MET-1</scope>
    <scope>IDENTIFICATION BY MASS SPECTROMETRY [LARGE SCALE ANALYSIS]</scope>
</reference>
<reference key="23">
    <citation type="journal article" date="2013" name="DNA Repair">
        <title>Dynamics of enzymatic interactions during short flap human Okazaki fragment processing by two forms of human DNA polymerase delta.</title>
        <authorList>
            <person name="Lin S.H."/>
            <person name="Wang X."/>
            <person name="Zhang S."/>
            <person name="Zhang Z."/>
            <person name="Lee E.Y."/>
            <person name="Lee M.Y."/>
        </authorList>
    </citation>
    <scope>FUNCTION IN OKAZAKI FRAGMENT PROCESSING</scope>
</reference>
<reference key="24">
    <citation type="journal article" date="2013" name="J. Biol. Chem.">
        <title>A novel function of CRL4(Cdt2): regulation of the subunit structure of DNA polymerase delta in response to DNA damage and during the S phase.</title>
        <authorList>
            <person name="Zhang S."/>
            <person name="Zhao H."/>
            <person name="Darzynkiewicz Z."/>
            <person name="Zhou P."/>
            <person name="Zhang Z."/>
            <person name="Lee E.Y."/>
            <person name="Lee M.Y."/>
        </authorList>
    </citation>
    <scope>POL-DELTA3 COMPLEX EXPRESSION DURING CELL CYCLE</scope>
</reference>
<reference key="25">
    <citation type="journal article" date="2013" name="J. Proteome Res.">
        <title>Toward a comprehensive characterization of a human cancer cell phosphoproteome.</title>
        <authorList>
            <person name="Zhou H."/>
            <person name="Di Palma S."/>
            <person name="Preisinger C."/>
            <person name="Peng M."/>
            <person name="Polat A.N."/>
            <person name="Heck A.J."/>
            <person name="Mohammed S."/>
        </authorList>
    </citation>
    <scope>PHOSPHORYLATION [LARGE SCALE ANALYSIS] AT SER-15 AND SER-257</scope>
    <scope>IDENTIFICATION BY MASS SPECTROMETRY [LARGE SCALE ANALYSIS]</scope>
    <source>
        <tissue>Cervix carcinoma</tissue>
        <tissue>Erythroleukemia</tissue>
    </source>
</reference>
<reference key="26">
    <citation type="journal article" date="2014" name="Proc. Natl. Acad. Sci. U.S.A.">
        <title>Human Pol zeta purified with accessory subunits is active in translesion DNA synthesis and complements Pol eta in cisplatin bypass.</title>
        <authorList>
            <person name="Lee Y.S."/>
            <person name="Gregory M.T."/>
            <person name="Yang W."/>
        </authorList>
    </citation>
    <scope>FUNCTION</scope>
    <scope>IDENTIFICATION IN POL-DELTA COMPLEX</scope>
    <scope>IDENTIFICATION IN POL-ZETA COMPLEX</scope>
</reference>
<reference key="27">
    <citation type="journal article" date="2014" name="Science">
        <title>Break-induced replication repair of damaged forks induces genomic duplications in human cells.</title>
        <authorList>
            <person name="Costantino L."/>
            <person name="Sotiriou S.K."/>
            <person name="Rantala J.K."/>
            <person name="Magin S."/>
            <person name="Mladenov E."/>
            <person name="Helleday T."/>
            <person name="Haber J.E."/>
            <person name="Iliakis G."/>
            <person name="Kallioniemi O.P."/>
            <person name="Halazonetis T.D."/>
        </authorList>
    </citation>
    <scope>FUNCTION IN BIR</scope>
</reference>
<reference key="28">
    <citation type="journal article" date="2008" name="Cell Cycle">
        <title>X-ray structure of the complex of regulatory subunits of human DNA polymerase delta.</title>
        <authorList>
            <person name="Baranovskiy A.G."/>
            <person name="Babayeva N.D."/>
            <person name="Liston V.G."/>
            <person name="Rogozin I.B."/>
            <person name="Koonin E.V."/>
            <person name="Pavlov Y.I."/>
            <person name="Vassylyev D.G."/>
            <person name="Tahirov T.H."/>
        </authorList>
    </citation>
    <scope>X-RAY CRYSTALLOGRAPHY (3.0 ANGSTROMS) IN COMPLEX WITH POLD3</scope>
    <scope>MUTAGENESIS OF LEU-217; GLY-224 AND GLU-231</scope>
</reference>
<reference key="29">
    <citation type="journal article" date="2019" name="J. Clin. Invest.">
        <title>Polymerase delta deficiency causes syndromic immunodeficiency with replicative stress.</title>
        <authorList>
            <person name="Conde C.D."/>
            <person name="Petronczki O.Y."/>
            <person name="Baris S."/>
            <person name="Willmann K.L."/>
            <person name="Girardi E."/>
            <person name="Salzer E."/>
            <person name="Weitzer S."/>
            <person name="Ardy R.C."/>
            <person name="Krolo A."/>
            <person name="Ijspeert H."/>
            <person name="Kiykim A."/>
            <person name="Karakoc-Aydiner E."/>
            <person name="Foerster-Waldl E."/>
            <person name="Kager L."/>
            <person name="Pickl W.F."/>
            <person name="Superti-Furga G."/>
            <person name="Martinez J."/>
            <person name="Loizou J.I."/>
            <person name="Ozen A."/>
            <person name="van der Burg M."/>
            <person name="Boztug K."/>
        </authorList>
    </citation>
    <scope>VARIANT ASN-293</scope>
    <scope>CHARACTERIZATION OF VARIANT ASN-293</scope>
    <scope>INTERACTION WITH POLD1 AND POLD3</scope>
</reference>
<dbReference type="EMBL" id="U21090">
    <property type="protein sequence ID" value="AAC50216.1"/>
    <property type="molecule type" value="mRNA"/>
</dbReference>
<dbReference type="EMBL" id="AF239710">
    <property type="protein sequence ID" value="AAG09763.1"/>
    <property type="molecule type" value="Genomic_DNA"/>
</dbReference>
<dbReference type="EMBL" id="AY116646">
    <property type="protein sequence ID" value="AAM51148.1"/>
    <property type="molecule type" value="Genomic_DNA"/>
</dbReference>
<dbReference type="EMBL" id="AK292347">
    <property type="protein sequence ID" value="BAF85036.1"/>
    <property type="molecule type" value="mRNA"/>
</dbReference>
<dbReference type="EMBL" id="AK312294">
    <property type="protein sequence ID" value="BAG35221.1"/>
    <property type="molecule type" value="mRNA"/>
</dbReference>
<dbReference type="EMBL" id="CH236960">
    <property type="protein sequence ID" value="EAL23767.1"/>
    <property type="molecule type" value="Genomic_DNA"/>
</dbReference>
<dbReference type="EMBL" id="CH471128">
    <property type="protein sequence ID" value="EAW61118.1"/>
    <property type="molecule type" value="Genomic_DNA"/>
</dbReference>
<dbReference type="EMBL" id="BC000459">
    <property type="protein sequence ID" value="AAH00459.1"/>
    <property type="molecule type" value="mRNA"/>
</dbReference>
<dbReference type="CCDS" id="CCDS5477.1"/>
<dbReference type="PIR" id="I38950">
    <property type="entry name" value="I38950"/>
</dbReference>
<dbReference type="RefSeq" id="NP_001120690.1">
    <property type="nucleotide sequence ID" value="NM_001127218.3"/>
</dbReference>
<dbReference type="RefSeq" id="NP_001243808.1">
    <property type="nucleotide sequence ID" value="NM_001256879.2"/>
</dbReference>
<dbReference type="RefSeq" id="NP_006221.3">
    <property type="nucleotide sequence ID" value="NM_006230.4"/>
</dbReference>
<dbReference type="RefSeq" id="XP_024302570.1">
    <property type="nucleotide sequence ID" value="XM_024446802.2"/>
</dbReference>
<dbReference type="RefSeq" id="XP_047276455.1">
    <property type="nucleotide sequence ID" value="XM_047420499.1"/>
</dbReference>
<dbReference type="RefSeq" id="XP_047276456.1">
    <property type="nucleotide sequence ID" value="XM_047420500.1"/>
</dbReference>
<dbReference type="RefSeq" id="XP_047276457.1">
    <property type="nucleotide sequence ID" value="XM_047420501.1"/>
</dbReference>
<dbReference type="RefSeq" id="XP_054214436.1">
    <property type="nucleotide sequence ID" value="XM_054358461.1"/>
</dbReference>
<dbReference type="RefSeq" id="XP_054214437.1">
    <property type="nucleotide sequence ID" value="XM_054358462.1"/>
</dbReference>
<dbReference type="RefSeq" id="XP_054214438.1">
    <property type="nucleotide sequence ID" value="XM_054358463.1"/>
</dbReference>
<dbReference type="RefSeq" id="XP_054214439.1">
    <property type="nucleotide sequence ID" value="XM_054358464.1"/>
</dbReference>
<dbReference type="PDB" id="3E0J">
    <property type="method" value="X-ray"/>
    <property type="resolution" value="3.00 A"/>
    <property type="chains" value="A/C/E/G=1-469"/>
</dbReference>
<dbReference type="PDB" id="6S1M">
    <property type="method" value="EM"/>
    <property type="resolution" value="4.27 A"/>
    <property type="chains" value="B=1-469"/>
</dbReference>
<dbReference type="PDB" id="6S1N">
    <property type="method" value="EM"/>
    <property type="resolution" value="4.86 A"/>
    <property type="chains" value="B=1-469"/>
</dbReference>
<dbReference type="PDB" id="6S1O">
    <property type="method" value="EM"/>
    <property type="resolution" value="8.10 A"/>
    <property type="chains" value="B=1-469"/>
</dbReference>
<dbReference type="PDB" id="6TNY">
    <property type="method" value="EM"/>
    <property type="resolution" value="3.08 A"/>
    <property type="chains" value="B=1-469"/>
</dbReference>
<dbReference type="PDB" id="6TNZ">
    <property type="method" value="EM"/>
    <property type="resolution" value="4.05 A"/>
    <property type="chains" value="B=1-469"/>
</dbReference>
<dbReference type="PDB" id="9EKB">
    <property type="method" value="EM"/>
    <property type="resolution" value="3.65 A"/>
    <property type="chains" value="B=1-469"/>
</dbReference>
<dbReference type="PDBsum" id="3E0J"/>
<dbReference type="PDBsum" id="6S1M"/>
<dbReference type="PDBsum" id="6S1N"/>
<dbReference type="PDBsum" id="6S1O"/>
<dbReference type="PDBsum" id="6TNY"/>
<dbReference type="PDBsum" id="6TNZ"/>
<dbReference type="PDBsum" id="9EKB"/>
<dbReference type="EMDB" id="EMD-10080"/>
<dbReference type="EMDB" id="EMD-10081"/>
<dbReference type="EMDB" id="EMD-10082"/>
<dbReference type="EMDB" id="EMD-10539"/>
<dbReference type="EMDB" id="EMD-10540"/>
<dbReference type="EMDB" id="EMD-48117"/>
<dbReference type="SMR" id="P49005"/>
<dbReference type="BioGRID" id="111421">
    <property type="interactions" value="77"/>
</dbReference>
<dbReference type="ComplexPortal" id="CPX-2097">
    <property type="entry name" value="DNA polymerase delta complex"/>
</dbReference>
<dbReference type="ComplexPortal" id="CPX-994">
    <property type="entry name" value="DNA polymerase zeta complex"/>
</dbReference>
<dbReference type="CORUM" id="P49005"/>
<dbReference type="FunCoup" id="P49005">
    <property type="interactions" value="1499"/>
</dbReference>
<dbReference type="IntAct" id="P49005">
    <property type="interactions" value="37"/>
</dbReference>
<dbReference type="MINT" id="P49005"/>
<dbReference type="STRING" id="9606.ENSP00000480186"/>
<dbReference type="ChEMBL" id="CHEMBL2363042"/>
<dbReference type="GlyCosmos" id="P49005">
    <property type="glycosylation" value="1 site, 1 glycan"/>
</dbReference>
<dbReference type="GlyGen" id="P49005">
    <property type="glycosylation" value="4 sites, 2 N-linked glycans (2 sites), 1 O-linked glycan (1 site)"/>
</dbReference>
<dbReference type="iPTMnet" id="P49005"/>
<dbReference type="PhosphoSitePlus" id="P49005"/>
<dbReference type="BioMuta" id="POLD2"/>
<dbReference type="DMDM" id="1352307"/>
<dbReference type="jPOST" id="P49005"/>
<dbReference type="MassIVE" id="P49005"/>
<dbReference type="PaxDb" id="9606-ENSP00000480186"/>
<dbReference type="PeptideAtlas" id="P49005"/>
<dbReference type="ProteomicsDB" id="55954"/>
<dbReference type="Pumba" id="P49005"/>
<dbReference type="Antibodypedia" id="13259">
    <property type="antibodies" value="203 antibodies from 28 providers"/>
</dbReference>
<dbReference type="DNASU" id="5425"/>
<dbReference type="Ensembl" id="ENST00000406581.6">
    <property type="protein sequence ID" value="ENSP00000386105.2"/>
    <property type="gene ID" value="ENSG00000106628.13"/>
</dbReference>
<dbReference type="Ensembl" id="ENST00000418438.2">
    <property type="protein sequence ID" value="ENSP00000406702.2"/>
    <property type="gene ID" value="ENSG00000106628.13"/>
</dbReference>
<dbReference type="Ensembl" id="ENST00000452185.5">
    <property type="protein sequence ID" value="ENSP00000395231.1"/>
    <property type="gene ID" value="ENSG00000106628.13"/>
</dbReference>
<dbReference type="Ensembl" id="ENST00000610533.6">
    <property type="protein sequence ID" value="ENSP00000480186.2"/>
    <property type="gene ID" value="ENSG00000106628.13"/>
</dbReference>
<dbReference type="Ensembl" id="ENST00000698945.1">
    <property type="protein sequence ID" value="ENSP00000514051.1"/>
    <property type="gene ID" value="ENSG00000106628.13"/>
</dbReference>
<dbReference type="Ensembl" id="ENST00000698946.1">
    <property type="protein sequence ID" value="ENSP00000514052.1"/>
    <property type="gene ID" value="ENSG00000106628.13"/>
</dbReference>
<dbReference type="Ensembl" id="ENST00000698947.1">
    <property type="protein sequence ID" value="ENSP00000514053.1"/>
    <property type="gene ID" value="ENSG00000106628.13"/>
</dbReference>
<dbReference type="GeneID" id="5425"/>
<dbReference type="KEGG" id="hsa:5425"/>
<dbReference type="MANE-Select" id="ENST00000610533.6">
    <property type="protein sequence ID" value="ENSP00000480186.2"/>
    <property type="RefSeq nucleotide sequence ID" value="NM_006230.4"/>
    <property type="RefSeq protein sequence ID" value="NP_006221.3"/>
</dbReference>
<dbReference type="UCSC" id="uc010kxz.5">
    <property type="organism name" value="human"/>
</dbReference>
<dbReference type="AGR" id="HGNC:9176"/>
<dbReference type="CTD" id="5425"/>
<dbReference type="DisGeNET" id="5425"/>
<dbReference type="GeneCards" id="POLD2"/>
<dbReference type="HGNC" id="HGNC:9176">
    <property type="gene designation" value="POLD2"/>
</dbReference>
<dbReference type="HPA" id="ENSG00000106628">
    <property type="expression patterns" value="Low tissue specificity"/>
</dbReference>
<dbReference type="MalaCards" id="POLD2"/>
<dbReference type="MIM" id="600815">
    <property type="type" value="gene"/>
</dbReference>
<dbReference type="neXtProt" id="NX_P49005"/>
<dbReference type="OpenTargets" id="ENSG00000106628"/>
<dbReference type="PharmGKB" id="PA33497"/>
<dbReference type="VEuPathDB" id="HostDB:ENSG00000106628"/>
<dbReference type="eggNOG" id="KOG2732">
    <property type="taxonomic scope" value="Eukaryota"/>
</dbReference>
<dbReference type="GeneTree" id="ENSGT00390000006780"/>
<dbReference type="HOGENOM" id="CLU_021763_0_0_1"/>
<dbReference type="InParanoid" id="P49005"/>
<dbReference type="OMA" id="HCILIGT"/>
<dbReference type="OrthoDB" id="3763at2759"/>
<dbReference type="PAN-GO" id="P49005">
    <property type="GO annotations" value="2 GO annotations based on evolutionary models"/>
</dbReference>
<dbReference type="PhylomeDB" id="P49005"/>
<dbReference type="TreeFam" id="TF101073"/>
<dbReference type="PathwayCommons" id="P49005"/>
<dbReference type="Reactome" id="R-HSA-110314">
    <property type="pathway name" value="Recognition of DNA damage by PCNA-containing replication complex"/>
</dbReference>
<dbReference type="Reactome" id="R-HSA-174411">
    <property type="pathway name" value="Polymerase switching on the C-strand of the telomere"/>
</dbReference>
<dbReference type="Reactome" id="R-HSA-174414">
    <property type="pathway name" value="Processive synthesis on the C-strand of the telomere"/>
</dbReference>
<dbReference type="Reactome" id="R-HSA-174417">
    <property type="pathway name" value="Telomere C-strand (Lagging Strand) Synthesis"/>
</dbReference>
<dbReference type="Reactome" id="R-HSA-174437">
    <property type="pathway name" value="Removal of the Flap Intermediate from the C-strand"/>
</dbReference>
<dbReference type="Reactome" id="R-HSA-5358565">
    <property type="pathway name" value="Mismatch repair (MMR) directed by MSH2:MSH6 (MutSalpha)"/>
</dbReference>
<dbReference type="Reactome" id="R-HSA-5358606">
    <property type="pathway name" value="Mismatch repair (MMR) directed by MSH2:MSH3 (MutSbeta)"/>
</dbReference>
<dbReference type="Reactome" id="R-HSA-5651801">
    <property type="pathway name" value="PCNA-Dependent Long Patch Base Excision Repair"/>
</dbReference>
<dbReference type="Reactome" id="R-HSA-5656169">
    <property type="pathway name" value="Termination of translesion DNA synthesis"/>
</dbReference>
<dbReference type="Reactome" id="R-HSA-5685942">
    <property type="pathway name" value="HDR through Homologous Recombination (HRR)"/>
</dbReference>
<dbReference type="Reactome" id="R-HSA-5696397">
    <property type="pathway name" value="Gap-filling DNA repair synthesis and ligation in GG-NER"/>
</dbReference>
<dbReference type="Reactome" id="R-HSA-5696400">
    <property type="pathway name" value="Dual Incision in GG-NER"/>
</dbReference>
<dbReference type="Reactome" id="R-HSA-6782135">
    <property type="pathway name" value="Dual incision in TC-NER"/>
</dbReference>
<dbReference type="Reactome" id="R-HSA-6782210">
    <property type="pathway name" value="Gap-filling DNA repair synthesis and ligation in TC-NER"/>
</dbReference>
<dbReference type="Reactome" id="R-HSA-69091">
    <property type="pathway name" value="Polymerase switching"/>
</dbReference>
<dbReference type="Reactome" id="R-HSA-69166">
    <property type="pathway name" value="Removal of the Flap Intermediate"/>
</dbReference>
<dbReference type="Reactome" id="R-HSA-69183">
    <property type="pathway name" value="Processive synthesis on the lagging strand"/>
</dbReference>
<dbReference type="SignaLink" id="P49005"/>
<dbReference type="SIGNOR" id="P49005"/>
<dbReference type="BioGRID-ORCS" id="5425">
    <property type="hits" value="775 hits in 1162 CRISPR screens"/>
</dbReference>
<dbReference type="ChiTaRS" id="POLD2">
    <property type="organism name" value="human"/>
</dbReference>
<dbReference type="EvolutionaryTrace" id="P49005"/>
<dbReference type="GeneWiki" id="POLD2"/>
<dbReference type="GenomeRNAi" id="5425"/>
<dbReference type="Pharos" id="P49005">
    <property type="development level" value="Tbio"/>
</dbReference>
<dbReference type="PRO" id="PR:P49005"/>
<dbReference type="Proteomes" id="UP000005640">
    <property type="component" value="Chromosome 7"/>
</dbReference>
<dbReference type="RNAct" id="P49005">
    <property type="molecule type" value="protein"/>
</dbReference>
<dbReference type="Bgee" id="ENSG00000106628">
    <property type="expression patterns" value="Expressed in right uterine tube and 205 other cell types or tissues"/>
</dbReference>
<dbReference type="ExpressionAtlas" id="P49005">
    <property type="expression patterns" value="baseline and differential"/>
</dbReference>
<dbReference type="GO" id="GO:0043625">
    <property type="term" value="C:delta DNA polymerase complex"/>
    <property type="evidence" value="ECO:0000314"/>
    <property type="project" value="UniProtKB"/>
</dbReference>
<dbReference type="GO" id="GO:0005654">
    <property type="term" value="C:nucleoplasm"/>
    <property type="evidence" value="ECO:0000314"/>
    <property type="project" value="HPA"/>
</dbReference>
<dbReference type="GO" id="GO:0005634">
    <property type="term" value="C:nucleus"/>
    <property type="evidence" value="ECO:0000304"/>
    <property type="project" value="ProtInc"/>
</dbReference>
<dbReference type="GO" id="GO:0016035">
    <property type="term" value="C:zeta DNA polymerase complex"/>
    <property type="evidence" value="ECO:0000314"/>
    <property type="project" value="FlyBase"/>
</dbReference>
<dbReference type="GO" id="GO:0003677">
    <property type="term" value="F:DNA binding"/>
    <property type="evidence" value="ECO:0007669"/>
    <property type="project" value="InterPro"/>
</dbReference>
<dbReference type="GO" id="GO:0071897">
    <property type="term" value="P:DNA biosynthetic process"/>
    <property type="evidence" value="ECO:0000314"/>
    <property type="project" value="UniProtKB"/>
</dbReference>
<dbReference type="GO" id="GO:0006260">
    <property type="term" value="P:DNA replication"/>
    <property type="evidence" value="ECO:0000304"/>
    <property type="project" value="ProtInc"/>
</dbReference>
<dbReference type="GO" id="GO:0006271">
    <property type="term" value="P:DNA strand elongation involved in DNA replication"/>
    <property type="evidence" value="ECO:0000318"/>
    <property type="project" value="GO_Central"/>
</dbReference>
<dbReference type="GO" id="GO:0006261">
    <property type="term" value="P:DNA-templated DNA replication"/>
    <property type="evidence" value="ECO:0000314"/>
    <property type="project" value="ComplexPortal"/>
</dbReference>
<dbReference type="GO" id="GO:0042276">
    <property type="term" value="P:error-prone translesion synthesis"/>
    <property type="evidence" value="ECO:0000314"/>
    <property type="project" value="ComplexPortal"/>
</dbReference>
<dbReference type="CDD" id="cd07387">
    <property type="entry name" value="MPP_PolD2_C"/>
    <property type="match status" value="1"/>
</dbReference>
<dbReference type="DisProt" id="DP01807"/>
<dbReference type="FunFam" id="3.60.21.50:FF:000001">
    <property type="entry name" value="DNA polymerase delta 2, accessory subunit"/>
    <property type="match status" value="1"/>
</dbReference>
<dbReference type="FunFam" id="3.60.21.50:FF:000008">
    <property type="entry name" value="DNA polymerase delta 2, accessory subunit"/>
    <property type="match status" value="1"/>
</dbReference>
<dbReference type="FunFam" id="2.40.50.430:FF:000001">
    <property type="entry name" value="DNA polymerase delta subunit 2"/>
    <property type="match status" value="1"/>
</dbReference>
<dbReference type="Gene3D" id="2.40.50.430">
    <property type="match status" value="1"/>
</dbReference>
<dbReference type="Gene3D" id="3.60.21.50">
    <property type="match status" value="1"/>
</dbReference>
<dbReference type="IDEAL" id="IID00051"/>
<dbReference type="InterPro" id="IPR007185">
    <property type="entry name" value="DNA_pol_a/d/e_bsu"/>
</dbReference>
<dbReference type="InterPro" id="IPR040663">
    <property type="entry name" value="DNA_pol_D_N"/>
</dbReference>
<dbReference type="InterPro" id="IPR024826">
    <property type="entry name" value="DNA_pol_delta/II_ssu"/>
</dbReference>
<dbReference type="InterPro" id="IPR041863">
    <property type="entry name" value="PolD2_C"/>
</dbReference>
<dbReference type="PANTHER" id="PTHR10416">
    <property type="entry name" value="DNA POLYMERASE DELTA SUBUNIT 2"/>
    <property type="match status" value="1"/>
</dbReference>
<dbReference type="PANTHER" id="PTHR10416:SF0">
    <property type="entry name" value="DNA POLYMERASE DELTA SUBUNIT 2"/>
    <property type="match status" value="1"/>
</dbReference>
<dbReference type="Pfam" id="PF18018">
    <property type="entry name" value="DNA_pol_D_N"/>
    <property type="match status" value="1"/>
</dbReference>
<dbReference type="Pfam" id="PF04042">
    <property type="entry name" value="DNA_pol_E_B"/>
    <property type="match status" value="1"/>
</dbReference>
<proteinExistence type="evidence at protein level"/>
<feature type="chain" id="PRO_0000096166" description="DNA polymerase delta subunit 2">
    <location>
        <begin position="1"/>
        <end position="469"/>
    </location>
</feature>
<feature type="modified residue" description="N-acetylmethionine" evidence="21 22">
    <location>
        <position position="1"/>
    </location>
</feature>
<feature type="modified residue" description="Phosphoserine" evidence="20 23">
    <location>
        <position position="15"/>
    </location>
</feature>
<feature type="modified residue" description="Phosphoserine" evidence="23">
    <location>
        <position position="257"/>
    </location>
</feature>
<feature type="sequence variant" id="VAR_089632" description="Found in a patient with a syndromic combined immunodeficiency disorder; uncertain significance; affects protein stability; strongly reduced interaction with POLD1 and POLD3; in peripheral blood mononuclear cells, after anti-CD3 and anti-CD28 stimulation, drastically reduced protein expression levels, despite transcript levels similar to that of wild-type controls; patient's cells also show strongly decreased POLD1 and POLD3 protein levels; no effect on DNA prolymerase activity, when tested in transfected HEK293 cells." evidence="17">
    <original>D</original>
    <variation>N</variation>
    <location>
        <position position="293"/>
    </location>
</feature>
<feature type="sequence variant" id="VAR_014885" description="In dbSNP:rs3087366." evidence="18">
    <original>N</original>
    <variation>S</variation>
    <location>
        <position position="303"/>
    </location>
</feature>
<feature type="mutagenesis site" description="Loss of POLD3-binding in a yeast two-hybrid assay." evidence="9">
    <original>L</original>
    <variation>W</variation>
    <location>
        <position position="217"/>
    </location>
</feature>
<feature type="mutagenesis site" description="Loss of POLD3-binding in a yeast two-hybrid assay." evidence="9">
    <original>G</original>
    <variation>W</variation>
    <location>
        <position position="224"/>
    </location>
</feature>
<feature type="mutagenesis site" description="Loss of POLD3-binding in a yeast two-hybrid assay." evidence="9">
    <original>E</original>
    <variation>W</variation>
    <location>
        <position position="231"/>
    </location>
</feature>
<feature type="sequence conflict" description="In Ref. 4; BAG35221." evidence="19" ref="4">
    <original>A</original>
    <variation>T</variation>
    <location>
        <position position="271"/>
    </location>
</feature>
<feature type="helix" evidence="24">
    <location>
        <begin position="2"/>
        <end position="7"/>
    </location>
</feature>
<feature type="strand" evidence="24">
    <location>
        <begin position="13"/>
        <end position="16"/>
    </location>
</feature>
<feature type="strand" evidence="24">
    <location>
        <begin position="32"/>
        <end position="34"/>
    </location>
</feature>
<feature type="helix" evidence="24">
    <location>
        <begin position="37"/>
        <end position="39"/>
    </location>
</feature>
<feature type="helix" evidence="24">
    <location>
        <begin position="55"/>
        <end position="72"/>
    </location>
</feature>
<feature type="strand" evidence="24">
    <location>
        <begin position="82"/>
        <end position="84"/>
    </location>
</feature>
<feature type="strand" evidence="24">
    <location>
        <begin position="91"/>
        <end position="100"/>
    </location>
</feature>
<feature type="strand" evidence="24">
    <location>
        <begin position="132"/>
        <end position="136"/>
    </location>
</feature>
<feature type="strand" evidence="24">
    <location>
        <begin position="141"/>
        <end position="147"/>
    </location>
</feature>
<feature type="turn" evidence="24">
    <location>
        <begin position="150"/>
        <end position="152"/>
    </location>
</feature>
<feature type="strand" evidence="24">
    <location>
        <begin position="158"/>
        <end position="165"/>
    </location>
</feature>
<feature type="strand" evidence="24">
    <location>
        <begin position="169"/>
        <end position="177"/>
    </location>
</feature>
<feature type="strand" evidence="24">
    <location>
        <begin position="195"/>
        <end position="199"/>
    </location>
</feature>
<feature type="helix" evidence="24">
    <location>
        <begin position="209"/>
        <end position="223"/>
    </location>
</feature>
<feature type="helix" evidence="24">
    <location>
        <begin position="229"/>
        <end position="235"/>
    </location>
</feature>
<feature type="strand" evidence="24">
    <location>
        <begin position="238"/>
        <end position="245"/>
    </location>
</feature>
<feature type="helix" evidence="24">
    <location>
        <begin position="265"/>
        <end position="287"/>
    </location>
</feature>
<feature type="strand" evidence="24">
    <location>
        <begin position="292"/>
        <end position="295"/>
    </location>
</feature>
<feature type="strand" evidence="24">
    <location>
        <begin position="300"/>
        <end position="302"/>
    </location>
</feature>
<feature type="strand" evidence="24">
    <location>
        <begin position="304"/>
        <end position="307"/>
    </location>
</feature>
<feature type="helix" evidence="25">
    <location>
        <begin position="313"/>
        <end position="315"/>
    </location>
</feature>
<feature type="helix" evidence="24">
    <location>
        <begin position="317"/>
        <end position="320"/>
    </location>
</feature>
<feature type="strand" evidence="24">
    <location>
        <begin position="325"/>
        <end position="327"/>
    </location>
</feature>
<feature type="strand" evidence="24">
    <location>
        <begin position="330"/>
        <end position="336"/>
    </location>
</feature>
<feature type="strand" evidence="24">
    <location>
        <begin position="339"/>
        <end position="343"/>
    </location>
</feature>
<feature type="helix" evidence="24">
    <location>
        <begin position="347"/>
        <end position="355"/>
    </location>
</feature>
<feature type="helix" evidence="24">
    <location>
        <begin position="361"/>
        <end position="370"/>
    </location>
</feature>
<feature type="turn" evidence="25">
    <location>
        <begin position="378"/>
        <end position="380"/>
    </location>
</feature>
<feature type="strand" evidence="24">
    <location>
        <begin position="400"/>
        <end position="409"/>
    </location>
</feature>
<feature type="strand" evidence="24">
    <location>
        <begin position="411"/>
        <end position="416"/>
    </location>
</feature>
<feature type="strand" evidence="25">
    <location>
        <begin position="418"/>
        <end position="420"/>
    </location>
</feature>
<feature type="strand" evidence="24">
    <location>
        <begin position="422"/>
        <end position="429"/>
    </location>
</feature>
<feature type="helix" evidence="24">
    <location>
        <begin position="431"/>
        <end position="434"/>
    </location>
</feature>
<feature type="strand" evidence="24">
    <location>
        <begin position="436"/>
        <end position="441"/>
    </location>
</feature>
<feature type="turn" evidence="24">
    <location>
        <begin position="442"/>
        <end position="445"/>
    </location>
</feature>
<feature type="strand" evidence="24">
    <location>
        <begin position="449"/>
        <end position="454"/>
    </location>
</feature>
<feature type="turn" evidence="24">
    <location>
        <begin position="460"/>
        <end position="462"/>
    </location>
</feature>
<protein>
    <recommendedName>
        <fullName>DNA polymerase delta subunit 2</fullName>
    </recommendedName>
    <alternativeName>
        <fullName>DNA polymerase delta subunit p50</fullName>
    </alternativeName>
</protein>
<organism>
    <name type="scientific">Homo sapiens</name>
    <name type="common">Human</name>
    <dbReference type="NCBI Taxonomy" id="9606"/>
    <lineage>
        <taxon>Eukaryota</taxon>
        <taxon>Metazoa</taxon>
        <taxon>Chordata</taxon>
        <taxon>Craniata</taxon>
        <taxon>Vertebrata</taxon>
        <taxon>Euteleostomi</taxon>
        <taxon>Mammalia</taxon>
        <taxon>Eutheria</taxon>
        <taxon>Euarchontoglires</taxon>
        <taxon>Primates</taxon>
        <taxon>Haplorrhini</taxon>
        <taxon>Catarrhini</taxon>
        <taxon>Hominidae</taxon>
        <taxon>Homo</taxon>
    </lineage>
</organism>
<keyword id="KW-0002">3D-structure</keyword>
<keyword id="KW-0007">Acetylation</keyword>
<keyword id="KW-0227">DNA damage</keyword>
<keyword id="KW-0228">DNA excision</keyword>
<keyword id="KW-0234">DNA repair</keyword>
<keyword id="KW-0235">DNA replication</keyword>
<keyword id="KW-0539">Nucleus</keyword>
<keyword id="KW-0597">Phosphoprotein</keyword>
<keyword id="KW-1267">Proteomics identification</keyword>
<keyword id="KW-1185">Reference proteome</keyword>
<gene>
    <name type="primary">POLD2</name>
</gene>
<accession>P49005</accession>
<accession>A4D2J4</accession>
<accession>B2R5S4</accession>